<evidence type="ECO:0000250" key="1">
    <source>
        <dbReference type="UniProtKB" id="P11544"/>
    </source>
</evidence>
<evidence type="ECO:0000250" key="2">
    <source>
        <dbReference type="UniProtKB" id="P24481"/>
    </source>
</evidence>
<evidence type="ECO:0000250" key="3">
    <source>
        <dbReference type="UniProtKB" id="Q68G84"/>
    </source>
</evidence>
<evidence type="ECO:0000255" key="4">
    <source>
        <dbReference type="PROSITE-ProRule" id="PRU10122"/>
    </source>
</evidence>
<evidence type="ECO:0000269" key="5">
    <source>
    </source>
</evidence>
<evidence type="ECO:0000305" key="6"/>
<dbReference type="EC" id="4.3.1.24" evidence="5"/>
<dbReference type="EMBL" id="L33679">
    <property type="protein sequence ID" value="AAA69905.1"/>
    <property type="molecule type" value="Genomic_DNA"/>
</dbReference>
<dbReference type="EMBL" id="AY528562">
    <property type="protein sequence ID" value="AAS18574.1"/>
    <property type="molecule type" value="mRNA"/>
</dbReference>
<dbReference type="EMBL" id="AL391716">
    <property type="protein sequence ID" value="CAC05505.1"/>
    <property type="status" value="ALT_SEQ"/>
    <property type="molecule type" value="Genomic_DNA"/>
</dbReference>
<dbReference type="EMBL" id="CP002688">
    <property type="protein sequence ID" value="AED90714.1"/>
    <property type="molecule type" value="Genomic_DNA"/>
</dbReference>
<dbReference type="PIR" id="S52992">
    <property type="entry name" value="S52992"/>
</dbReference>
<dbReference type="RefSeq" id="NP_001190223.1">
    <property type="nucleotide sequence ID" value="NM_001203294.1"/>
</dbReference>
<dbReference type="RefSeq" id="NP_196043.2">
    <molecule id="P45725-1"/>
    <property type="nucleotide sequence ID" value="NM_120505.4"/>
</dbReference>
<dbReference type="SMR" id="P45725"/>
<dbReference type="BioGRID" id="15582">
    <property type="interactions" value="3"/>
</dbReference>
<dbReference type="FunCoup" id="P45725">
    <property type="interactions" value="257"/>
</dbReference>
<dbReference type="STRING" id="3702.P45725"/>
<dbReference type="GlyGen" id="P45725">
    <property type="glycosylation" value="1 site"/>
</dbReference>
<dbReference type="iPTMnet" id="P45725"/>
<dbReference type="PaxDb" id="3702-AT5G04230.2"/>
<dbReference type="ProteomicsDB" id="248745">
    <molecule id="P45725-1"/>
</dbReference>
<dbReference type="EnsemblPlants" id="AT5G04230.1">
    <molecule id="P45725-1"/>
    <property type="protein sequence ID" value="AT5G04230.1"/>
    <property type="gene ID" value="AT5G04230"/>
</dbReference>
<dbReference type="GeneID" id="830302"/>
<dbReference type="Gramene" id="AT5G04230.1">
    <molecule id="P45725-1"/>
    <property type="protein sequence ID" value="AT5G04230.1"/>
    <property type="gene ID" value="AT5G04230"/>
</dbReference>
<dbReference type="KEGG" id="ath:AT5G04230"/>
<dbReference type="Araport" id="AT5G04230"/>
<dbReference type="TAIR" id="AT5G04230">
    <property type="gene designation" value="PAL3"/>
</dbReference>
<dbReference type="eggNOG" id="KOG0222">
    <property type="taxonomic scope" value="Eukaryota"/>
</dbReference>
<dbReference type="InParanoid" id="P45725"/>
<dbReference type="PhylomeDB" id="P45725"/>
<dbReference type="BRENDA" id="4.3.1.24">
    <property type="organism ID" value="399"/>
</dbReference>
<dbReference type="SABIO-RK" id="P45725"/>
<dbReference type="UniPathway" id="UPA00713">
    <property type="reaction ID" value="UER00725"/>
</dbReference>
<dbReference type="PRO" id="PR:P45725"/>
<dbReference type="Proteomes" id="UP000006548">
    <property type="component" value="Chromosome 5"/>
</dbReference>
<dbReference type="ExpressionAtlas" id="P45725">
    <property type="expression patterns" value="baseline and differential"/>
</dbReference>
<dbReference type="GO" id="GO:0005737">
    <property type="term" value="C:cytoplasm"/>
    <property type="evidence" value="ECO:0007669"/>
    <property type="project" value="UniProtKB-SubCell"/>
</dbReference>
<dbReference type="GO" id="GO:0045548">
    <property type="term" value="F:phenylalanine ammonia-lyase activity"/>
    <property type="evidence" value="ECO:0007669"/>
    <property type="project" value="UniProtKB-EC"/>
</dbReference>
<dbReference type="GO" id="GO:0009800">
    <property type="term" value="P:cinnamic acid biosynthetic process"/>
    <property type="evidence" value="ECO:0007669"/>
    <property type="project" value="UniProtKB-UniPathway"/>
</dbReference>
<dbReference type="GO" id="GO:0006559">
    <property type="term" value="P:L-phenylalanine catabolic process"/>
    <property type="evidence" value="ECO:0007669"/>
    <property type="project" value="UniProtKB-KW"/>
</dbReference>
<dbReference type="CDD" id="cd00332">
    <property type="entry name" value="PAL-HAL"/>
    <property type="match status" value="1"/>
</dbReference>
<dbReference type="FunFam" id="1.10.274.20:FF:000002">
    <property type="match status" value="1"/>
</dbReference>
<dbReference type="FunFam" id="1.10.275.10:FF:000009">
    <property type="entry name" value="Phenylalanine ammonia-lyase"/>
    <property type="match status" value="1"/>
</dbReference>
<dbReference type="FunFam" id="1.20.200.10:FF:000009">
    <property type="entry name" value="Phenylalanine ammonia-lyase"/>
    <property type="match status" value="1"/>
</dbReference>
<dbReference type="Gene3D" id="1.20.200.10">
    <property type="entry name" value="Fumarase/aspartase (Central domain)"/>
    <property type="match status" value="1"/>
</dbReference>
<dbReference type="Gene3D" id="1.10.275.10">
    <property type="entry name" value="Fumarase/aspartase (N-terminal domain)"/>
    <property type="match status" value="1"/>
</dbReference>
<dbReference type="Gene3D" id="1.10.274.20">
    <property type="entry name" value="Phenylalanine ammonia-lyase 1, domain 3"/>
    <property type="match status" value="1"/>
</dbReference>
<dbReference type="InterPro" id="IPR001106">
    <property type="entry name" value="Aromatic_Lyase"/>
</dbReference>
<dbReference type="InterPro" id="IPR024083">
    <property type="entry name" value="Fumarase/histidase_N"/>
</dbReference>
<dbReference type="InterPro" id="IPR008948">
    <property type="entry name" value="L-Aspartase-like"/>
</dbReference>
<dbReference type="InterPro" id="IPR022313">
    <property type="entry name" value="Phe/His_NH3-lyase_AS"/>
</dbReference>
<dbReference type="InterPro" id="IPR005922">
    <property type="entry name" value="Phe_NH3-lyase"/>
</dbReference>
<dbReference type="InterPro" id="IPR023144">
    <property type="entry name" value="Phe_NH3-lyase_shielding_dom_sf"/>
</dbReference>
<dbReference type="NCBIfam" id="TIGR01226">
    <property type="entry name" value="phe_am_lyase"/>
    <property type="match status" value="1"/>
</dbReference>
<dbReference type="PANTHER" id="PTHR10362">
    <property type="entry name" value="HISTIDINE AMMONIA-LYASE"/>
    <property type="match status" value="1"/>
</dbReference>
<dbReference type="Pfam" id="PF00221">
    <property type="entry name" value="Lyase_aromatic"/>
    <property type="match status" value="1"/>
</dbReference>
<dbReference type="SUPFAM" id="SSF48557">
    <property type="entry name" value="L-aspartase-like"/>
    <property type="match status" value="1"/>
</dbReference>
<dbReference type="PROSITE" id="PS00488">
    <property type="entry name" value="PAL_HISTIDASE"/>
    <property type="match status" value="1"/>
</dbReference>
<gene>
    <name type="primary">PAL3</name>
    <name type="ordered locus">At5g04230</name>
    <name type="ORF">F21E1_150</name>
</gene>
<comment type="function">
    <text evidence="5">This is a key enzyme of plant metabolism catalyzing the first reaction in the biosynthesis from L-phenylalanine of a wide variety of natural products based on the phenylpropane skeleton.</text>
</comment>
<comment type="catalytic activity">
    <reaction evidence="5">
        <text>L-phenylalanine = (E)-cinnamate + NH4(+)</text>
        <dbReference type="Rhea" id="RHEA:21384"/>
        <dbReference type="ChEBI" id="CHEBI:15669"/>
        <dbReference type="ChEBI" id="CHEBI:28938"/>
        <dbReference type="ChEBI" id="CHEBI:58095"/>
        <dbReference type="EC" id="4.3.1.24"/>
    </reaction>
</comment>
<comment type="biophysicochemical properties">
    <kinetics>
        <KM evidence="5">2.56 mM for L-phenylalanine</KM>
        <Vmax evidence="5">0.4 umol/sec/mg enzyme</Vmax>
    </kinetics>
    <phDependence>
        <text evidence="5">Optimum pH is 8.7-8.9.</text>
    </phDependence>
    <temperatureDependence>
        <text evidence="5">Optimum temperature is 31 degrees Celsius.</text>
    </temperatureDependence>
</comment>
<comment type="pathway">
    <text evidence="6">Phenylpropanoid metabolism; trans-cinnamate biosynthesis; trans-cinnamate from L-phenylalanine: step 1/1.</text>
</comment>
<comment type="subunit">
    <text evidence="2">Homotetramer.</text>
</comment>
<comment type="subcellular location">
    <subcellularLocation>
        <location evidence="6">Cytoplasm</location>
    </subcellularLocation>
</comment>
<comment type="alternative products">
    <event type="alternative splicing"/>
    <isoform>
        <id>P45725-1</id>
        <name>1</name>
        <sequence type="displayed"/>
    </isoform>
    <text>A number of isoforms are produced. According to EST sequences.</text>
</comment>
<comment type="PTM">
    <text evidence="3">Contains an active site 4-methylidene-imidazol-5-one (MIO), which is formed autocatalytically by cyclization and dehydration of residues Ala-Ser-Gly.</text>
</comment>
<comment type="similarity">
    <text evidence="6">Belongs to the PAL/histidase family.</text>
</comment>
<comment type="sequence caution" evidence="6">
    <conflict type="erroneous gene model prediction">
        <sequence resource="EMBL-CDS" id="CAC05505"/>
    </conflict>
</comment>
<protein>
    <recommendedName>
        <fullName>Phenylalanine ammonia-lyase 3</fullName>
        <ecNumber evidence="5">4.3.1.24</ecNumber>
    </recommendedName>
</protein>
<sequence length="694" mass="76241">MEFRQPNATALSDPLNWNVAAEALKGSHLEEVKKMVKDYRKGTVQLGGETLTIGQVAAVASGGPTVELSEEARGGVKASSDWVMESMNRDTDTYGITTGFGSSSRRRTDQGAALQKELIRYLNAGIFATGNEDDDRSNTLPRPATRAAMLIRVNTLLQGYSGIRFEILEAITTLLNCKITPLLPLRGTITASGDLVPLSYIAGFLIGRPNSRSVGPSGEILTALEAFKLAGVSSFFELRPKEGLALVNGTAVGSALASTVLYDANILVVFSEVASAMFAEVMQGKPEFTDHLTHKLKHHPGQIEAAAIMEHILDGSSYVKEALHLHKIDPLQKPKQDRYALRTSPQWLGPQIEVIRAATKMIEREINSVNDNPLIDVSRNKAIHGGNFQGTPIGVAMDNTRLALASIGKLMFAQFTELVNDFYNNGLPSNLSGGRNPSLDYGLKGAEVAMASYCSELQFLANPVTNHVESASQHNQDVNSLGLISSRTTAEAVVILKLMSTTYLVALCQAFDLRHLEEILKKAVNEVVSHTAKSVLAIEPFRKHDDILGVVNREYVFSYVDDPSSLTNPLMQKLRHVLFDKALAEPEGETDTVFRKIGAFEAELKFLLPKEVERVRTEYENGTFNVANRIKKCRSYPLYRFVRNELETRLLTGEDVRSPGEDFDKVFRAISQGKLIDPLFECLKEWNGAPISIC</sequence>
<feature type="chain" id="PRO_0000215384" description="Phenylalanine ammonia-lyase 3">
    <location>
        <begin position="1"/>
        <end position="694"/>
    </location>
</feature>
<feature type="active site" description="Proton donor/acceptor" evidence="3">
    <location>
        <position position="94"/>
    </location>
</feature>
<feature type="binding site" evidence="3">
    <location>
        <position position="248"/>
    </location>
    <ligand>
        <name>(E)-cinnamate</name>
        <dbReference type="ChEBI" id="CHEBI:15669"/>
    </ligand>
</feature>
<feature type="binding site" evidence="3">
    <location>
        <position position="336"/>
    </location>
    <ligand>
        <name>(E)-cinnamate</name>
        <dbReference type="ChEBI" id="CHEBI:15669"/>
    </ligand>
</feature>
<feature type="binding site" evidence="3">
    <location>
        <position position="342"/>
    </location>
    <ligand>
        <name>(E)-cinnamate</name>
        <dbReference type="ChEBI" id="CHEBI:15669"/>
    </ligand>
</feature>
<feature type="binding site" evidence="3">
    <location>
        <position position="372"/>
    </location>
    <ligand>
        <name>(E)-cinnamate</name>
        <dbReference type="ChEBI" id="CHEBI:15669"/>
    </ligand>
</feature>
<feature type="binding site" evidence="1">
    <location>
        <position position="444"/>
    </location>
    <ligand>
        <name>(E)-cinnamate</name>
        <dbReference type="ChEBI" id="CHEBI:15669"/>
    </ligand>
</feature>
<feature type="binding site" evidence="3">
    <location>
        <position position="475"/>
    </location>
    <ligand>
        <name>(E)-cinnamate</name>
        <dbReference type="ChEBI" id="CHEBI:15669"/>
    </ligand>
</feature>
<feature type="modified residue" description="2,3-didehydroalanine (Ser)" evidence="4">
    <location>
        <position position="192"/>
    </location>
</feature>
<feature type="cross-link" description="5-imidazolinone (Ala-Gly)" evidence="3">
    <location>
        <begin position="191"/>
        <end position="193"/>
    </location>
</feature>
<feature type="sequence conflict" description="In Ref. 1; AAA69905." evidence="6" ref="1">
    <original>G</original>
    <variation>GG</variation>
    <location>
        <position position="63"/>
    </location>
</feature>
<reference key="1">
    <citation type="journal article" date="1995" name="Plant Mol. Biol.">
        <title>The phenylalanine ammonia-lyase gene family in Arabidopsis thaliana.</title>
        <authorList>
            <person name="Wanner L.A."/>
            <person name="Li G."/>
            <person name="Ware D."/>
            <person name="Somssich I.E."/>
            <person name="Davis K.R."/>
        </authorList>
    </citation>
    <scope>NUCLEOTIDE SEQUENCE [GENOMIC DNA]</scope>
    <source>
        <strain>cv. Columbia</strain>
    </source>
</reference>
<reference key="2">
    <citation type="journal article" date="2004" name="Phytochemistry">
        <title>The Arabidopsis phenylalanine ammonia lyase gene family: kinetic characterization of the four PAL isoforms.</title>
        <authorList>
            <person name="Cochrane F.C."/>
            <person name="Davin L.B."/>
            <person name="Lewis N.G."/>
        </authorList>
    </citation>
    <scope>NUCLEOTIDE SEQUENCE [MRNA]</scope>
    <scope>FUNCTION</scope>
    <scope>CATALYTIC ACTIVITY</scope>
    <scope>BIOPHYSICOCHEMICAL PROPERTIES</scope>
    <source>
        <strain>cv. Columbia</strain>
    </source>
</reference>
<reference key="3">
    <citation type="journal article" date="2000" name="Nature">
        <title>Sequence and analysis of chromosome 5 of the plant Arabidopsis thaliana.</title>
        <authorList>
            <person name="Tabata S."/>
            <person name="Kaneko T."/>
            <person name="Nakamura Y."/>
            <person name="Kotani H."/>
            <person name="Kato T."/>
            <person name="Asamizu E."/>
            <person name="Miyajima N."/>
            <person name="Sasamoto S."/>
            <person name="Kimura T."/>
            <person name="Hosouchi T."/>
            <person name="Kawashima K."/>
            <person name="Kohara M."/>
            <person name="Matsumoto M."/>
            <person name="Matsuno A."/>
            <person name="Muraki A."/>
            <person name="Nakayama S."/>
            <person name="Nakazaki N."/>
            <person name="Naruo K."/>
            <person name="Okumura S."/>
            <person name="Shinpo S."/>
            <person name="Takeuchi C."/>
            <person name="Wada T."/>
            <person name="Watanabe A."/>
            <person name="Yamada M."/>
            <person name="Yasuda M."/>
            <person name="Sato S."/>
            <person name="de la Bastide M."/>
            <person name="Huang E."/>
            <person name="Spiegel L."/>
            <person name="Gnoj L."/>
            <person name="O'Shaughnessy A."/>
            <person name="Preston R."/>
            <person name="Habermann K."/>
            <person name="Murray J."/>
            <person name="Johnson D."/>
            <person name="Rohlfing T."/>
            <person name="Nelson J."/>
            <person name="Stoneking T."/>
            <person name="Pepin K."/>
            <person name="Spieth J."/>
            <person name="Sekhon M."/>
            <person name="Armstrong J."/>
            <person name="Becker M."/>
            <person name="Belter E."/>
            <person name="Cordum H."/>
            <person name="Cordes M."/>
            <person name="Courtney L."/>
            <person name="Courtney W."/>
            <person name="Dante M."/>
            <person name="Du H."/>
            <person name="Edwards J."/>
            <person name="Fryman J."/>
            <person name="Haakensen B."/>
            <person name="Lamar E."/>
            <person name="Latreille P."/>
            <person name="Leonard S."/>
            <person name="Meyer R."/>
            <person name="Mulvaney E."/>
            <person name="Ozersky P."/>
            <person name="Riley A."/>
            <person name="Strowmatt C."/>
            <person name="Wagner-McPherson C."/>
            <person name="Wollam A."/>
            <person name="Yoakum M."/>
            <person name="Bell M."/>
            <person name="Dedhia N."/>
            <person name="Parnell L."/>
            <person name="Shah R."/>
            <person name="Rodriguez M."/>
            <person name="Hoon See L."/>
            <person name="Vil D."/>
            <person name="Baker J."/>
            <person name="Kirchoff K."/>
            <person name="Toth K."/>
            <person name="King L."/>
            <person name="Bahret A."/>
            <person name="Miller B."/>
            <person name="Marra M.A."/>
            <person name="Martienssen R."/>
            <person name="McCombie W.R."/>
            <person name="Wilson R.K."/>
            <person name="Murphy G."/>
            <person name="Bancroft I."/>
            <person name="Volckaert G."/>
            <person name="Wambutt R."/>
            <person name="Duesterhoeft A."/>
            <person name="Stiekema W."/>
            <person name="Pohl T."/>
            <person name="Entian K.-D."/>
            <person name="Terryn N."/>
            <person name="Hartley N."/>
            <person name="Bent E."/>
            <person name="Johnson S."/>
            <person name="Langham S.-A."/>
            <person name="McCullagh B."/>
            <person name="Robben J."/>
            <person name="Grymonprez B."/>
            <person name="Zimmermann W."/>
            <person name="Ramsperger U."/>
            <person name="Wedler H."/>
            <person name="Balke K."/>
            <person name="Wedler E."/>
            <person name="Peters S."/>
            <person name="van Staveren M."/>
            <person name="Dirkse W."/>
            <person name="Mooijman P."/>
            <person name="Klein Lankhorst R."/>
            <person name="Weitzenegger T."/>
            <person name="Bothe G."/>
            <person name="Rose M."/>
            <person name="Hauf J."/>
            <person name="Berneiser S."/>
            <person name="Hempel S."/>
            <person name="Feldpausch M."/>
            <person name="Lamberth S."/>
            <person name="Villarroel R."/>
            <person name="Gielen J."/>
            <person name="Ardiles W."/>
            <person name="Bents O."/>
            <person name="Lemcke K."/>
            <person name="Kolesov G."/>
            <person name="Mayer K.F.X."/>
            <person name="Rudd S."/>
            <person name="Schoof H."/>
            <person name="Schueller C."/>
            <person name="Zaccaria P."/>
            <person name="Mewes H.-W."/>
            <person name="Bevan M."/>
            <person name="Fransz P.F."/>
        </authorList>
    </citation>
    <scope>NUCLEOTIDE SEQUENCE [LARGE SCALE GENOMIC DNA]</scope>
    <source>
        <strain>cv. Columbia</strain>
    </source>
</reference>
<reference key="4">
    <citation type="journal article" date="2017" name="Plant J.">
        <title>Araport11: a complete reannotation of the Arabidopsis thaliana reference genome.</title>
        <authorList>
            <person name="Cheng C.Y."/>
            <person name="Krishnakumar V."/>
            <person name="Chan A.P."/>
            <person name="Thibaud-Nissen F."/>
            <person name="Schobel S."/>
            <person name="Town C.D."/>
        </authorList>
    </citation>
    <scope>GENOME REANNOTATION</scope>
    <source>
        <strain>cv. Columbia</strain>
    </source>
</reference>
<keyword id="KW-0025">Alternative splicing</keyword>
<keyword id="KW-0963">Cytoplasm</keyword>
<keyword id="KW-0456">Lyase</keyword>
<keyword id="KW-0585">Phenylalanine catabolism</keyword>
<keyword id="KW-0587">Phenylpropanoid metabolism</keyword>
<keyword id="KW-1185">Reference proteome</keyword>
<name>PAL3_ARATH</name>
<accession>P45725</accession>
<accession>Q53YP2</accession>
<accession>Q9FYD8</accession>
<proteinExistence type="evidence at protein level"/>
<organism>
    <name type="scientific">Arabidopsis thaliana</name>
    <name type="common">Mouse-ear cress</name>
    <dbReference type="NCBI Taxonomy" id="3702"/>
    <lineage>
        <taxon>Eukaryota</taxon>
        <taxon>Viridiplantae</taxon>
        <taxon>Streptophyta</taxon>
        <taxon>Embryophyta</taxon>
        <taxon>Tracheophyta</taxon>
        <taxon>Spermatophyta</taxon>
        <taxon>Magnoliopsida</taxon>
        <taxon>eudicotyledons</taxon>
        <taxon>Gunneridae</taxon>
        <taxon>Pentapetalae</taxon>
        <taxon>rosids</taxon>
        <taxon>malvids</taxon>
        <taxon>Brassicales</taxon>
        <taxon>Brassicaceae</taxon>
        <taxon>Camelineae</taxon>
        <taxon>Arabidopsis</taxon>
    </lineage>
</organism>